<sequence length="224" mass="24327">MDCREMDLYEDYQSPFDFDAGVNKSYLYLSPSGNSSPPGSPTLQKFGLLRTDPVPEEGEDVAATISATETLSEEEQEELRRELAKVEEEIQTLSQVLAAKEKHLAEIKRKLGINSLQELKQNIAKGWQDVTATSAYKKTSETLSQAGQKASAAFSSVGSVITKKLEDVKNSPTFKSFEEKVENLKSKVGGTKPAGGDFGEVLNSAANASATTTEPLPEKTQESL</sequence>
<name>TPD52_HUMAN</name>
<organism>
    <name type="scientific">Homo sapiens</name>
    <name type="common">Human</name>
    <dbReference type="NCBI Taxonomy" id="9606"/>
    <lineage>
        <taxon>Eukaryota</taxon>
        <taxon>Metazoa</taxon>
        <taxon>Chordata</taxon>
        <taxon>Craniata</taxon>
        <taxon>Vertebrata</taxon>
        <taxon>Euteleostomi</taxon>
        <taxon>Mammalia</taxon>
        <taxon>Eutheria</taxon>
        <taxon>Euarchontoglires</taxon>
        <taxon>Primates</taxon>
        <taxon>Haplorrhini</taxon>
        <taxon>Catarrhini</taxon>
        <taxon>Hominidae</taxon>
        <taxon>Homo</taxon>
    </lineage>
</organism>
<evidence type="ECO:0000250" key="1">
    <source>
        <dbReference type="UniProtKB" id="Q62393"/>
    </source>
</evidence>
<evidence type="ECO:0000255" key="2"/>
<evidence type="ECO:0000256" key="3">
    <source>
        <dbReference type="SAM" id="MobiDB-lite"/>
    </source>
</evidence>
<evidence type="ECO:0000269" key="4">
    <source>
    </source>
</evidence>
<evidence type="ECO:0000303" key="5">
    <source>
    </source>
</evidence>
<evidence type="ECO:0000303" key="6">
    <source>
    </source>
</evidence>
<evidence type="ECO:0000303" key="7">
    <source>
    </source>
</evidence>
<evidence type="ECO:0000303" key="8">
    <source>
    </source>
</evidence>
<evidence type="ECO:0000303" key="9">
    <source>
    </source>
</evidence>
<evidence type="ECO:0000303" key="10">
    <source ref="6"/>
</evidence>
<evidence type="ECO:0000303" key="11">
    <source ref="7"/>
</evidence>
<evidence type="ECO:0000303" key="12">
    <source ref="9"/>
</evidence>
<evidence type="ECO:0000305" key="13"/>
<evidence type="ECO:0007744" key="14">
    <source>
    </source>
</evidence>
<proteinExistence type="evidence at protein level"/>
<reference key="1">
    <citation type="journal article" date="1995" name="Cancer Res.">
        <title>A screening method to identify genes commonly overexpressed in carcinomas and the identification of a novel complementary DNA sequence.</title>
        <authorList>
            <person name="Byrne J.A."/>
            <person name="Tomasetto C."/>
            <person name="Garnier J.-M."/>
            <person name="Rouyer N."/>
            <person name="Mattei M.-G."/>
            <person name="Bellocq J.-P."/>
            <person name="Rio M.C."/>
            <person name="Basset P."/>
        </authorList>
    </citation>
    <scope>NUCLEOTIDE SEQUENCE [MRNA] (ISOFORM 2)</scope>
    <source>
        <tissue>Mammary carcinoma</tissue>
    </source>
</reference>
<reference key="2">
    <citation type="journal article" date="1996" name="Oncogene">
        <title>Isolation and characterization of a novel gene expressed in multiple cancers.</title>
        <authorList>
            <person name="Chen S.-L."/>
            <person name="Maroulakou I.G."/>
            <person name="Green J.E."/>
            <person name="Romano-Spica V."/>
            <person name="Modi W."/>
            <person name="Lautenberger J."/>
            <person name="Bhat N.K."/>
        </authorList>
    </citation>
    <scope>NUCLEOTIDE SEQUENCE [MRNA] (ISOFORMS 2 AND 3)</scope>
    <scope>TISSUE SPECIFICITY</scope>
    <scope>DEVELOPMENTAL STAGE</scope>
    <scope>ALTERNATIVE SPLICING</scope>
    <source>
        <tissue>Lung tumor</tissue>
    </source>
</reference>
<reference key="3">
    <citation type="journal article" date="2004" name="Cancer Res.">
        <title>PrLZ, a novel prostate-specific and androgen-responsive gene of the TPD52 family, amplified in chromosome 8q21.1 and overexpressed in human prostate cancer.</title>
        <authorList>
            <person name="Wang R."/>
            <person name="Xu J."/>
            <person name="Saramaki O."/>
            <person name="Visakorpi T."/>
            <person name="Sutherland W.M."/>
            <person name="Zhou J."/>
            <person name="Sen B."/>
            <person name="Lim S.D."/>
            <person name="Mabjeesh N."/>
            <person name="Amin M."/>
            <person name="Dong J.T."/>
            <person name="Petros J.A."/>
            <person name="Nelson P.S."/>
            <person name="Marshall F.F."/>
            <person name="Zhau H.E."/>
            <person name="Chung L.W."/>
        </authorList>
    </citation>
    <scope>NUCLEOTIDE SEQUENCE [MRNA] (ISOFORM 1)</scope>
</reference>
<reference key="4">
    <citation type="journal article" date="2009" name="Biochem. Biophys. Res. Commun.">
        <title>Transcription variants of the prostate-specific PrLZ gene and their interaction with 14-3-3 proteins.</title>
        <authorList>
            <person name="Wang R."/>
            <person name="He H."/>
            <person name="Sun X."/>
            <person name="Xu J."/>
            <person name="Marshall F.F."/>
            <person name="Zhau H."/>
            <person name="Chung L.W."/>
            <person name="Fu H."/>
            <person name="He D."/>
        </authorList>
    </citation>
    <scope>NUCLEOTIDE SEQUENCE [MRNA] (ISOFORMS 1; 5; 6; 7 AND 8)</scope>
    <scope>ALTERNATIVE SPLICING</scope>
    <scope>INTERACTION WITH 14-3-3 PROTEINS</scope>
</reference>
<reference key="5">
    <citation type="journal article" date="2004" name="Nat. Genet.">
        <title>Complete sequencing and characterization of 21,243 full-length human cDNAs.</title>
        <authorList>
            <person name="Ota T."/>
            <person name="Suzuki Y."/>
            <person name="Nishikawa T."/>
            <person name="Otsuki T."/>
            <person name="Sugiyama T."/>
            <person name="Irie R."/>
            <person name="Wakamatsu A."/>
            <person name="Hayashi K."/>
            <person name="Sato H."/>
            <person name="Nagai K."/>
            <person name="Kimura K."/>
            <person name="Makita H."/>
            <person name="Sekine M."/>
            <person name="Obayashi M."/>
            <person name="Nishi T."/>
            <person name="Shibahara T."/>
            <person name="Tanaka T."/>
            <person name="Ishii S."/>
            <person name="Yamamoto J."/>
            <person name="Saito K."/>
            <person name="Kawai Y."/>
            <person name="Isono Y."/>
            <person name="Nakamura Y."/>
            <person name="Nagahari K."/>
            <person name="Murakami K."/>
            <person name="Yasuda T."/>
            <person name="Iwayanagi T."/>
            <person name="Wagatsuma M."/>
            <person name="Shiratori A."/>
            <person name="Sudo H."/>
            <person name="Hosoiri T."/>
            <person name="Kaku Y."/>
            <person name="Kodaira H."/>
            <person name="Kondo H."/>
            <person name="Sugawara M."/>
            <person name="Takahashi M."/>
            <person name="Kanda K."/>
            <person name="Yokoi T."/>
            <person name="Furuya T."/>
            <person name="Kikkawa E."/>
            <person name="Omura Y."/>
            <person name="Abe K."/>
            <person name="Kamihara K."/>
            <person name="Katsuta N."/>
            <person name="Sato K."/>
            <person name="Tanikawa M."/>
            <person name="Yamazaki M."/>
            <person name="Ninomiya K."/>
            <person name="Ishibashi T."/>
            <person name="Yamashita H."/>
            <person name="Murakawa K."/>
            <person name="Fujimori K."/>
            <person name="Tanai H."/>
            <person name="Kimata M."/>
            <person name="Watanabe M."/>
            <person name="Hiraoka S."/>
            <person name="Chiba Y."/>
            <person name="Ishida S."/>
            <person name="Ono Y."/>
            <person name="Takiguchi S."/>
            <person name="Watanabe S."/>
            <person name="Yosida M."/>
            <person name="Hotuta T."/>
            <person name="Kusano J."/>
            <person name="Kanehori K."/>
            <person name="Takahashi-Fujii A."/>
            <person name="Hara H."/>
            <person name="Tanase T.-O."/>
            <person name="Nomura Y."/>
            <person name="Togiya S."/>
            <person name="Komai F."/>
            <person name="Hara R."/>
            <person name="Takeuchi K."/>
            <person name="Arita M."/>
            <person name="Imose N."/>
            <person name="Musashino K."/>
            <person name="Yuuki H."/>
            <person name="Oshima A."/>
            <person name="Sasaki N."/>
            <person name="Aotsuka S."/>
            <person name="Yoshikawa Y."/>
            <person name="Matsunawa H."/>
            <person name="Ichihara T."/>
            <person name="Shiohata N."/>
            <person name="Sano S."/>
            <person name="Moriya S."/>
            <person name="Momiyama H."/>
            <person name="Satoh N."/>
            <person name="Takami S."/>
            <person name="Terashima Y."/>
            <person name="Suzuki O."/>
            <person name="Nakagawa S."/>
            <person name="Senoh A."/>
            <person name="Mizoguchi H."/>
            <person name="Goto Y."/>
            <person name="Shimizu F."/>
            <person name="Wakebe H."/>
            <person name="Hishigaki H."/>
            <person name="Watanabe T."/>
            <person name="Sugiyama A."/>
            <person name="Takemoto M."/>
            <person name="Kawakami B."/>
            <person name="Yamazaki M."/>
            <person name="Watanabe K."/>
            <person name="Kumagai A."/>
            <person name="Itakura S."/>
            <person name="Fukuzumi Y."/>
            <person name="Fujimori Y."/>
            <person name="Komiyama M."/>
            <person name="Tashiro H."/>
            <person name="Tanigami A."/>
            <person name="Fujiwara T."/>
            <person name="Ono T."/>
            <person name="Yamada K."/>
            <person name="Fujii Y."/>
            <person name="Ozaki K."/>
            <person name="Hirao M."/>
            <person name="Ohmori Y."/>
            <person name="Kawabata A."/>
            <person name="Hikiji T."/>
            <person name="Kobatake N."/>
            <person name="Inagaki H."/>
            <person name="Ikema Y."/>
            <person name="Okamoto S."/>
            <person name="Okitani R."/>
            <person name="Kawakami T."/>
            <person name="Noguchi S."/>
            <person name="Itoh T."/>
            <person name="Shigeta K."/>
            <person name="Senba T."/>
            <person name="Matsumura K."/>
            <person name="Nakajima Y."/>
            <person name="Mizuno T."/>
            <person name="Morinaga M."/>
            <person name="Sasaki M."/>
            <person name="Togashi T."/>
            <person name="Oyama M."/>
            <person name="Hata H."/>
            <person name="Watanabe M."/>
            <person name="Komatsu T."/>
            <person name="Mizushima-Sugano J."/>
            <person name="Satoh T."/>
            <person name="Shirai Y."/>
            <person name="Takahashi Y."/>
            <person name="Nakagawa K."/>
            <person name="Okumura K."/>
            <person name="Nagase T."/>
            <person name="Nomura N."/>
            <person name="Kikuchi H."/>
            <person name="Masuho Y."/>
            <person name="Yamashita R."/>
            <person name="Nakai K."/>
            <person name="Yada T."/>
            <person name="Nakamura Y."/>
            <person name="Ohara O."/>
            <person name="Isogai T."/>
            <person name="Sugano S."/>
        </authorList>
    </citation>
    <scope>NUCLEOTIDE SEQUENCE [LARGE SCALE MRNA] (ISOFORMS 1; 2 AND 4)</scope>
    <source>
        <tissue>Colon</tissue>
        <tissue>Hippocampus</tissue>
        <tissue>Tongue</tissue>
    </source>
</reference>
<reference key="6">
    <citation type="submission" date="2004-06" db="EMBL/GenBank/DDBJ databases">
        <title>Cloning of human full open reading frames in Gateway(TM) system entry vector (pDONR201).</title>
        <authorList>
            <person name="Ebert L."/>
            <person name="Schick M."/>
            <person name="Neubert P."/>
            <person name="Schatten R."/>
            <person name="Henze S."/>
            <person name="Korn B."/>
        </authorList>
    </citation>
    <scope>NUCLEOTIDE SEQUENCE [LARGE SCALE MRNA] (ISOFORM 2)</scope>
</reference>
<reference key="7">
    <citation type="submission" date="2004-10" db="EMBL/GenBank/DDBJ databases">
        <title>Cloning of human full-length CDSs in BD Creator(TM) system donor vector.</title>
        <authorList>
            <person name="Kalnine N."/>
            <person name="Chen X."/>
            <person name="Rolfs A."/>
            <person name="Halleck A."/>
            <person name="Hines L."/>
            <person name="Eisenstein S."/>
            <person name="Koundinya M."/>
            <person name="Raphael J."/>
            <person name="Moreira D."/>
            <person name="Kelley T."/>
            <person name="LaBaer J."/>
            <person name="Lin Y."/>
            <person name="Phelan M."/>
            <person name="Farmer A."/>
        </authorList>
    </citation>
    <scope>NUCLEOTIDE SEQUENCE [LARGE SCALE MRNA] (ISOFORM 2)</scope>
</reference>
<reference key="8">
    <citation type="journal article" date="2007" name="BMC Genomics">
        <title>The full-ORF clone resource of the German cDNA consortium.</title>
        <authorList>
            <person name="Bechtel S."/>
            <person name="Rosenfelder H."/>
            <person name="Duda A."/>
            <person name="Schmidt C.P."/>
            <person name="Ernst U."/>
            <person name="Wellenreuther R."/>
            <person name="Mehrle A."/>
            <person name="Schuster C."/>
            <person name="Bahr A."/>
            <person name="Bloecker H."/>
            <person name="Heubner D."/>
            <person name="Hoerlein A."/>
            <person name="Michel G."/>
            <person name="Wedler H."/>
            <person name="Koehrer K."/>
            <person name="Ottenwaelder B."/>
            <person name="Poustka A."/>
            <person name="Wiemann S."/>
            <person name="Schupp I."/>
        </authorList>
    </citation>
    <scope>NUCLEOTIDE SEQUENCE [LARGE SCALE MRNA] (ISOFORM 1)</scope>
    <source>
        <tissue>Rectum tumor</tissue>
    </source>
</reference>
<reference key="9">
    <citation type="submission" date="2005-04" db="EMBL/GenBank/DDBJ databases">
        <authorList>
            <person name="Totoki Y."/>
            <person name="Toyoda A."/>
            <person name="Takeda T."/>
            <person name="Sakaki Y."/>
            <person name="Tanaka A."/>
            <person name="Yokoyama S."/>
        </authorList>
    </citation>
    <scope>NUCLEOTIDE SEQUENCE [LARGE SCALE MRNA] (ISOFORM 2)</scope>
    <source>
        <tissue>Spleen</tissue>
    </source>
</reference>
<reference key="10">
    <citation type="journal article" date="2006" name="Nature">
        <title>DNA sequence and analysis of human chromosome 8.</title>
        <authorList>
            <person name="Nusbaum C."/>
            <person name="Mikkelsen T.S."/>
            <person name="Zody M.C."/>
            <person name="Asakawa S."/>
            <person name="Taudien S."/>
            <person name="Garber M."/>
            <person name="Kodira C.D."/>
            <person name="Schueler M.G."/>
            <person name="Shimizu A."/>
            <person name="Whittaker C.A."/>
            <person name="Chang J.L."/>
            <person name="Cuomo C.A."/>
            <person name="Dewar K."/>
            <person name="FitzGerald M.G."/>
            <person name="Yang X."/>
            <person name="Allen N.R."/>
            <person name="Anderson S."/>
            <person name="Asakawa T."/>
            <person name="Blechschmidt K."/>
            <person name="Bloom T."/>
            <person name="Borowsky M.L."/>
            <person name="Butler J."/>
            <person name="Cook A."/>
            <person name="Corum B."/>
            <person name="DeArellano K."/>
            <person name="DeCaprio D."/>
            <person name="Dooley K.T."/>
            <person name="Dorris L. III"/>
            <person name="Engels R."/>
            <person name="Gloeckner G."/>
            <person name="Hafez N."/>
            <person name="Hagopian D.S."/>
            <person name="Hall J.L."/>
            <person name="Ishikawa S.K."/>
            <person name="Jaffe D.B."/>
            <person name="Kamat A."/>
            <person name="Kudoh J."/>
            <person name="Lehmann R."/>
            <person name="Lokitsang T."/>
            <person name="Macdonald P."/>
            <person name="Major J.E."/>
            <person name="Matthews C.D."/>
            <person name="Mauceli E."/>
            <person name="Menzel U."/>
            <person name="Mihalev A.H."/>
            <person name="Minoshima S."/>
            <person name="Murayama Y."/>
            <person name="Naylor J.W."/>
            <person name="Nicol R."/>
            <person name="Nguyen C."/>
            <person name="O'Leary S.B."/>
            <person name="O'Neill K."/>
            <person name="Parker S.C.J."/>
            <person name="Polley A."/>
            <person name="Raymond C.K."/>
            <person name="Reichwald K."/>
            <person name="Rodriguez J."/>
            <person name="Sasaki T."/>
            <person name="Schilhabel M."/>
            <person name="Siddiqui R."/>
            <person name="Smith C.L."/>
            <person name="Sneddon T.P."/>
            <person name="Talamas J.A."/>
            <person name="Tenzin P."/>
            <person name="Topham K."/>
            <person name="Venkataraman V."/>
            <person name="Wen G."/>
            <person name="Yamazaki S."/>
            <person name="Young S.K."/>
            <person name="Zeng Q."/>
            <person name="Zimmer A.R."/>
            <person name="Rosenthal A."/>
            <person name="Birren B.W."/>
            <person name="Platzer M."/>
            <person name="Shimizu N."/>
            <person name="Lander E.S."/>
        </authorList>
    </citation>
    <scope>NUCLEOTIDE SEQUENCE [LARGE SCALE GENOMIC DNA]</scope>
</reference>
<reference key="11">
    <citation type="submission" date="2005-07" db="EMBL/GenBank/DDBJ databases">
        <authorList>
            <person name="Mural R.J."/>
            <person name="Istrail S."/>
            <person name="Sutton G.G."/>
            <person name="Florea L."/>
            <person name="Halpern A.L."/>
            <person name="Mobarry C.M."/>
            <person name="Lippert R."/>
            <person name="Walenz B."/>
            <person name="Shatkay H."/>
            <person name="Dew I."/>
            <person name="Miller J.R."/>
            <person name="Flanigan M.J."/>
            <person name="Edwards N.J."/>
            <person name="Bolanos R."/>
            <person name="Fasulo D."/>
            <person name="Halldorsson B.V."/>
            <person name="Hannenhalli S."/>
            <person name="Turner R."/>
            <person name="Yooseph S."/>
            <person name="Lu F."/>
            <person name="Nusskern D.R."/>
            <person name="Shue B.C."/>
            <person name="Zheng X.H."/>
            <person name="Zhong F."/>
            <person name="Delcher A.L."/>
            <person name="Huson D.H."/>
            <person name="Kravitz S.A."/>
            <person name="Mouchard L."/>
            <person name="Reinert K."/>
            <person name="Remington K.A."/>
            <person name="Clark A.G."/>
            <person name="Waterman M.S."/>
            <person name="Eichler E.E."/>
            <person name="Adams M.D."/>
            <person name="Hunkapiller M.W."/>
            <person name="Myers E.W."/>
            <person name="Venter J.C."/>
        </authorList>
    </citation>
    <scope>NUCLEOTIDE SEQUENCE [LARGE SCALE GENOMIC DNA]</scope>
</reference>
<reference key="12">
    <citation type="journal article" date="2004" name="Genome Res.">
        <title>The status, quality, and expansion of the NIH full-length cDNA project: the Mammalian Gene Collection (MGC).</title>
        <authorList>
            <consortium name="The MGC Project Team"/>
        </authorList>
    </citation>
    <scope>NUCLEOTIDE SEQUENCE [LARGE SCALE MRNA] (ISOFORM 2)</scope>
    <source>
        <tissue>Skin</tissue>
    </source>
</reference>
<reference key="13">
    <citation type="journal article" date="1998" name="Oncogene">
        <title>Identification of homo- and heteromeric interactions between members of the breast carcinoma-associated D52 protein family using the yeast two-hybrid system.</title>
        <authorList>
            <person name="Byrne J.A."/>
            <person name="Nourse C.R."/>
            <person name="Basset P."/>
            <person name="Gunning P."/>
        </authorList>
    </citation>
    <scope>INTERACTION</scope>
</reference>
<reference key="14">
    <citation type="journal article" date="2008" name="Proc. Natl. Acad. Sci. U.S.A.">
        <title>A quantitative atlas of mitotic phosphorylation.</title>
        <authorList>
            <person name="Dephoure N."/>
            <person name="Zhou C."/>
            <person name="Villen J."/>
            <person name="Beausoleil S.A."/>
            <person name="Bakalarski C.E."/>
            <person name="Elledge S.J."/>
            <person name="Gygi S.P."/>
        </authorList>
    </citation>
    <scope>PHOSPHORYLATION [LARGE SCALE ANALYSIS] AT SER-223</scope>
    <scope>IDENTIFICATION BY MASS SPECTROMETRY [LARGE SCALE ANALYSIS]</scope>
    <source>
        <tissue>Cervix carcinoma</tissue>
    </source>
</reference>
<reference key="15">
    <citation type="journal article" date="2011" name="BMC Syst. Biol.">
        <title>Initial characterization of the human central proteome.</title>
        <authorList>
            <person name="Burkard T.R."/>
            <person name="Planyavsky M."/>
            <person name="Kaupe I."/>
            <person name="Breitwieser F.P."/>
            <person name="Buerckstuemmer T."/>
            <person name="Bennett K.L."/>
            <person name="Superti-Furga G."/>
            <person name="Colinge J."/>
        </authorList>
    </citation>
    <scope>IDENTIFICATION BY MASS SPECTROMETRY [LARGE SCALE ANALYSIS]</scope>
</reference>
<reference key="16">
    <citation type="journal article" date="2014" name="J. Proteomics">
        <title>An enzyme assisted RP-RPLC approach for in-depth analysis of human liver phosphoproteome.</title>
        <authorList>
            <person name="Bian Y."/>
            <person name="Song C."/>
            <person name="Cheng K."/>
            <person name="Dong M."/>
            <person name="Wang F."/>
            <person name="Huang J."/>
            <person name="Sun D."/>
            <person name="Wang L."/>
            <person name="Ye M."/>
            <person name="Zou H."/>
        </authorList>
    </citation>
    <scope>IDENTIFICATION BY MASS SPECTROMETRY [LARGE SCALE ANALYSIS]</scope>
    <source>
        <tissue>Liver</tissue>
    </source>
</reference>
<comment type="subunit">
    <text>Forms a homodimer or heterodimer with other members of the family. All isoforms interact with several 14-3-3 proteins.</text>
</comment>
<comment type="interaction">
    <interactant intactId="EBI-782581">
        <id>P55327</id>
    </interactant>
    <interactant intactId="EBI-717470">
        <id>Q16890</id>
        <label>TPD52L1</label>
    </interactant>
    <organismsDiffer>false</organismsDiffer>
    <experiments>6</experiments>
</comment>
<comment type="interaction">
    <interactant intactId="EBI-782581">
        <id>P55327</id>
    </interactant>
    <interactant intactId="EBI-782591">
        <id>Q62393</id>
        <label>Tpd52</label>
    </interactant>
    <organismsDiffer>true</organismsDiffer>
    <experiments>2</experiments>
</comment>
<comment type="interaction">
    <interactant intactId="EBI-12124194">
        <id>P55327-2</id>
    </interactant>
    <interactant intactId="EBI-740987">
        <id>Q9NQG6</id>
        <label>MIEF1</label>
    </interactant>
    <organismsDiffer>false</organismsDiffer>
    <experiments>3</experiments>
</comment>
<comment type="interaction">
    <interactant intactId="EBI-12124194">
        <id>P55327-2</id>
    </interactant>
    <interactant intactId="EBI-2623095">
        <id>Q9Y371</id>
        <label>SH3GLB1</label>
    </interactant>
    <organismsDiffer>false</organismsDiffer>
    <experiments>3</experiments>
</comment>
<comment type="interaction">
    <interactant intactId="EBI-12124194">
        <id>P55327-2</id>
    </interactant>
    <interactant intactId="EBI-742688">
        <id>Q9NZD8</id>
        <label>SPG21</label>
    </interactant>
    <organismsDiffer>false</organismsDiffer>
    <experiments>3</experiments>
</comment>
<comment type="interaction">
    <interactant intactId="EBI-12124194">
        <id>P55327-2</id>
    </interactant>
    <interactant intactId="EBI-726691">
        <id>Q8WY91</id>
        <label>THAP4</label>
    </interactant>
    <organismsDiffer>false</organismsDiffer>
    <experiments>3</experiments>
</comment>
<comment type="interaction">
    <interactant intactId="EBI-12124194">
        <id>P55327-2</id>
    </interactant>
    <interactant intactId="EBI-18777952">
        <id>Q16890-2</id>
        <label>TPD52L1</label>
    </interactant>
    <organismsDiffer>false</organismsDiffer>
    <experiments>3</experiments>
</comment>
<comment type="interaction">
    <interactant intactId="EBI-12124194">
        <id>P55327-2</id>
    </interactant>
    <interactant intactId="EBI-10210710">
        <id>P49638</id>
        <label>TTPA</label>
    </interactant>
    <organismsDiffer>false</organismsDiffer>
    <experiments>3</experiments>
</comment>
<comment type="alternative products">
    <event type="alternative splicing"/>
    <isoform>
        <id>P55327-1</id>
        <name>1</name>
        <sequence type="displayed"/>
    </isoform>
    <isoform>
        <id>P55327-2</id>
        <name>2</name>
        <sequence type="described" ref="VSP_035751"/>
    </isoform>
    <isoform>
        <id>P55327-3</id>
        <name>3</name>
        <name>N8L</name>
        <sequence type="described" ref="VSP_037378"/>
    </isoform>
    <isoform>
        <id>P55327-4</id>
        <name>4</name>
        <sequence type="described" ref="VSP_035751 VSP_043510"/>
    </isoform>
    <isoform>
        <id>P55327-5</id>
        <name>5</name>
        <name>PrLZ-238</name>
        <sequence type="described" ref="VSP_047719"/>
    </isoform>
    <isoform>
        <id>P55327-6</id>
        <name>6</name>
        <name>PrLZ-247</name>
        <sequence type="described" ref="VSP_043510"/>
    </isoform>
    <isoform>
        <id>P55327-7</id>
        <name>7</name>
        <name>PrLZ-233</name>
        <sequence type="described" ref="VSP_047720"/>
    </isoform>
    <isoform>
        <id>P55327-8</id>
        <name>8</name>
        <name>PrLZ-151</name>
        <sequence type="described" ref="VSP_047718"/>
    </isoform>
</comment>
<comment type="tissue specificity">
    <text evidence="4">Isoform 2 is expressed in colon, breast, prostate, pancreas and kidney tumor cell lines. Isoform 2 is expressed at high levels in kidney, prostate, brain, small intestine and pancreas, at moderate levels in placenta and colon, at low levels in lung, liver and heart, and at very low levels in spleen, thymus, peripheral mononuclear blood cells, testis and ovary.</text>
</comment>
<comment type="developmental stage">
    <text evidence="4">Isoform 2 is expressed at lower levels in fetal brain and kidney than in adult brain and kidney.</text>
</comment>
<comment type="miscellaneous">
    <molecule>Isoform 8</molecule>
    <text evidence="13">Interacts only with YWHAB and YWHAQ among 14-3-3 proteins.</text>
</comment>
<comment type="similarity">
    <text evidence="13">Belongs to the TPD52 family.</text>
</comment>
<comment type="sequence caution" evidence="13">
    <conflict type="erroneous initiation">
        <sequence resource="EMBL-CDS" id="BAD97351"/>
    </conflict>
</comment>
<comment type="online information" name="Atlas of Genetics and Cytogenetics in Oncology and Haematology">
    <link uri="https://atlasgeneticsoncology.org/gene/42676/TPD52"/>
</comment>
<protein>
    <recommendedName>
        <fullName>Tumor protein D52</fullName>
    </recommendedName>
    <alternativeName>
        <fullName>Protein N8</fullName>
    </alternativeName>
</protein>
<dbReference type="EMBL" id="U18914">
    <property type="protein sequence ID" value="AAC50183.1"/>
    <property type="molecule type" value="mRNA"/>
</dbReference>
<dbReference type="EMBL" id="S82081">
    <property type="protein sequence ID" value="AAB36475.1"/>
    <property type="molecule type" value="mRNA"/>
</dbReference>
<dbReference type="EMBL" id="AF202897">
    <property type="protein sequence ID" value="AAO22156.1"/>
    <property type="molecule type" value="mRNA"/>
</dbReference>
<dbReference type="EMBL" id="GQ499324">
    <property type="protein sequence ID" value="ACY08776.1"/>
    <property type="molecule type" value="mRNA"/>
</dbReference>
<dbReference type="EMBL" id="GQ499325">
    <property type="protein sequence ID" value="ACY08777.1"/>
    <property type="molecule type" value="mRNA"/>
</dbReference>
<dbReference type="EMBL" id="GQ499326">
    <property type="protein sequence ID" value="ACY08778.1"/>
    <property type="molecule type" value="mRNA"/>
</dbReference>
<dbReference type="EMBL" id="GQ499327">
    <property type="protein sequence ID" value="ACY08779.1"/>
    <property type="molecule type" value="mRNA"/>
</dbReference>
<dbReference type="EMBL" id="GQ499328">
    <property type="protein sequence ID" value="ACY08780.1"/>
    <property type="molecule type" value="mRNA"/>
</dbReference>
<dbReference type="EMBL" id="AK295468">
    <property type="protein sequence ID" value="BAH12078.1"/>
    <property type="molecule type" value="mRNA"/>
</dbReference>
<dbReference type="EMBL" id="AK296615">
    <property type="protein sequence ID" value="BAH12400.1"/>
    <property type="molecule type" value="mRNA"/>
</dbReference>
<dbReference type="EMBL" id="AK313135">
    <property type="protein sequence ID" value="BAG35954.1"/>
    <property type="molecule type" value="mRNA"/>
</dbReference>
<dbReference type="EMBL" id="CR542034">
    <property type="protein sequence ID" value="CAG46831.1"/>
    <property type="molecule type" value="mRNA"/>
</dbReference>
<dbReference type="EMBL" id="CR542064">
    <property type="protein sequence ID" value="CAG46861.1"/>
    <property type="molecule type" value="mRNA"/>
</dbReference>
<dbReference type="EMBL" id="BT019444">
    <property type="protein sequence ID" value="AAV38251.1"/>
    <property type="molecule type" value="mRNA"/>
</dbReference>
<dbReference type="EMBL" id="BX640835">
    <property type="protein sequence ID" value="CAE45908.1"/>
    <property type="molecule type" value="mRNA"/>
</dbReference>
<dbReference type="EMBL" id="AK223631">
    <property type="protein sequence ID" value="BAD97351.1"/>
    <property type="status" value="ALT_INIT"/>
    <property type="molecule type" value="mRNA"/>
</dbReference>
<dbReference type="EMBL" id="AC009686">
    <property type="status" value="NOT_ANNOTATED_CDS"/>
    <property type="molecule type" value="Genomic_DNA"/>
</dbReference>
<dbReference type="EMBL" id="AC018952">
    <property type="status" value="NOT_ANNOTATED_CDS"/>
    <property type="molecule type" value="Genomic_DNA"/>
</dbReference>
<dbReference type="EMBL" id="AC036214">
    <property type="status" value="NOT_ANNOTATED_CDS"/>
    <property type="molecule type" value="Genomic_DNA"/>
</dbReference>
<dbReference type="EMBL" id="AC104212">
    <property type="status" value="NOT_ANNOTATED_CDS"/>
    <property type="molecule type" value="Genomic_DNA"/>
</dbReference>
<dbReference type="EMBL" id="CH471068">
    <property type="protein sequence ID" value="EAW87074.1"/>
    <property type="molecule type" value="Genomic_DNA"/>
</dbReference>
<dbReference type="EMBL" id="BC018117">
    <property type="protein sequence ID" value="AAH18117.1"/>
    <property type="molecule type" value="mRNA"/>
</dbReference>
<dbReference type="CCDS" id="CCDS34912.1">
    <molecule id="P55327-1"/>
</dbReference>
<dbReference type="CCDS" id="CCDS47879.1">
    <molecule id="P55327-4"/>
</dbReference>
<dbReference type="CCDS" id="CCDS55249.1">
    <molecule id="P55327-2"/>
</dbReference>
<dbReference type="CCDS" id="CCDS75757.1">
    <molecule id="P55327-5"/>
</dbReference>
<dbReference type="CCDS" id="CCDS75758.1">
    <molecule id="P55327-7"/>
</dbReference>
<dbReference type="CCDS" id="CCDS75759.1">
    <molecule id="P55327-6"/>
</dbReference>
<dbReference type="PIR" id="I38910">
    <property type="entry name" value="I38910"/>
</dbReference>
<dbReference type="RefSeq" id="NP_001020423.1">
    <molecule id="P55327-1"/>
    <property type="nucleotide sequence ID" value="NM_001025252.3"/>
</dbReference>
<dbReference type="RefSeq" id="NP_001020424.1">
    <molecule id="P55327-4"/>
    <property type="nucleotide sequence ID" value="NM_001025253.3"/>
</dbReference>
<dbReference type="RefSeq" id="NP_001274069.1">
    <molecule id="P55327-6"/>
    <property type="nucleotide sequence ID" value="NM_001287140.2"/>
</dbReference>
<dbReference type="RefSeq" id="NP_001274071.1">
    <molecule id="P55327-5"/>
    <property type="nucleotide sequence ID" value="NM_001287142.2"/>
</dbReference>
<dbReference type="RefSeq" id="NP_001274072.1">
    <molecule id="P55327-7"/>
    <property type="nucleotide sequence ID" value="NM_001287143.2"/>
</dbReference>
<dbReference type="RefSeq" id="NP_001274073.1">
    <property type="nucleotide sequence ID" value="NM_001287144.1"/>
</dbReference>
<dbReference type="RefSeq" id="NP_005070.1">
    <molecule id="P55327-2"/>
    <property type="nucleotide sequence ID" value="NM_005079.4"/>
</dbReference>
<dbReference type="SMR" id="P55327"/>
<dbReference type="BioGRID" id="113016">
    <property type="interactions" value="114"/>
</dbReference>
<dbReference type="FunCoup" id="P55327">
    <property type="interactions" value="1974"/>
</dbReference>
<dbReference type="IntAct" id="P55327">
    <property type="interactions" value="47"/>
</dbReference>
<dbReference type="MINT" id="P55327"/>
<dbReference type="STRING" id="9606.ENSP00000429309"/>
<dbReference type="GlyCosmos" id="P55327">
    <property type="glycosylation" value="1 site, 1 glycan"/>
</dbReference>
<dbReference type="GlyGen" id="P55327">
    <property type="glycosylation" value="2 sites, 1 O-linked glycan (2 sites)"/>
</dbReference>
<dbReference type="iPTMnet" id="P55327"/>
<dbReference type="PhosphoSitePlus" id="P55327"/>
<dbReference type="BioMuta" id="TPD52"/>
<dbReference type="DMDM" id="215273966"/>
<dbReference type="jPOST" id="P55327"/>
<dbReference type="MassIVE" id="P55327"/>
<dbReference type="PaxDb" id="9606-ENSP00000429309"/>
<dbReference type="PeptideAtlas" id="P55327"/>
<dbReference type="ProteomicsDB" id="12721"/>
<dbReference type="ProteomicsDB" id="12722"/>
<dbReference type="ProteomicsDB" id="12723"/>
<dbReference type="ProteomicsDB" id="56847">
    <molecule id="P55327-1"/>
</dbReference>
<dbReference type="ProteomicsDB" id="56848">
    <molecule id="P55327-2"/>
</dbReference>
<dbReference type="ProteomicsDB" id="56849">
    <molecule id="P55327-3"/>
</dbReference>
<dbReference type="ProteomicsDB" id="56850">
    <molecule id="P55327-4"/>
</dbReference>
<dbReference type="ProteomicsDB" id="8547"/>
<dbReference type="Pumba" id="P55327"/>
<dbReference type="TopDownProteomics" id="P55327-2">
    <molecule id="P55327-2"/>
</dbReference>
<dbReference type="TopDownProteomics" id="P55327-4">
    <molecule id="P55327-4"/>
</dbReference>
<dbReference type="Antibodypedia" id="25297">
    <property type="antibodies" value="292 antibodies from 30 providers"/>
</dbReference>
<dbReference type="DNASU" id="7163"/>
<dbReference type="Ensembl" id="ENST00000379096.9">
    <molecule id="P55327-2"/>
    <property type="protein sequence ID" value="ENSP00000368390.4"/>
    <property type="gene ID" value="ENSG00000076554.16"/>
</dbReference>
<dbReference type="Ensembl" id="ENST00000379097.7">
    <molecule id="P55327-1"/>
    <property type="protein sequence ID" value="ENSP00000368391.3"/>
    <property type="gene ID" value="ENSG00000076554.16"/>
</dbReference>
<dbReference type="Ensembl" id="ENST00000448733.3">
    <molecule id="P55327-5"/>
    <property type="protein sequence ID" value="ENSP00000410222.2"/>
    <property type="gene ID" value="ENSG00000076554.16"/>
</dbReference>
<dbReference type="Ensembl" id="ENST00000517427.5">
    <molecule id="P55327-7"/>
    <property type="protein sequence ID" value="ENSP00000429351.1"/>
    <property type="gene ID" value="ENSG00000076554.16"/>
</dbReference>
<dbReference type="Ensembl" id="ENST00000517462.6">
    <molecule id="P55327-8"/>
    <property type="protein sequence ID" value="ENSP00000429708.1"/>
    <property type="gene ID" value="ENSG00000076554.16"/>
</dbReference>
<dbReference type="Ensembl" id="ENST00000518937.6">
    <molecule id="P55327-4"/>
    <property type="protein sequence ID" value="ENSP00000429915.1"/>
    <property type="gene ID" value="ENSG00000076554.16"/>
</dbReference>
<dbReference type="Ensembl" id="ENST00000520527.5">
    <molecule id="P55327-6"/>
    <property type="protein sequence ID" value="ENSP00000429309.1"/>
    <property type="gene ID" value="ENSG00000076554.16"/>
</dbReference>
<dbReference type="GeneID" id="7163"/>
<dbReference type="KEGG" id="hsa:7163"/>
<dbReference type="MANE-Select" id="ENST00000518937.6">
    <molecule id="P55327-4"/>
    <property type="protein sequence ID" value="ENSP00000429915.1"/>
    <property type="RefSeq nucleotide sequence ID" value="NM_001025253.3"/>
    <property type="RefSeq protein sequence ID" value="NP_001020424.1"/>
</dbReference>
<dbReference type="UCSC" id="uc003ybr.3">
    <molecule id="P55327-1"/>
    <property type="organism name" value="human"/>
</dbReference>
<dbReference type="AGR" id="HGNC:12005"/>
<dbReference type="CTD" id="7163"/>
<dbReference type="DisGeNET" id="7163"/>
<dbReference type="GeneCards" id="TPD52"/>
<dbReference type="HGNC" id="HGNC:12005">
    <property type="gene designation" value="TPD52"/>
</dbReference>
<dbReference type="HPA" id="ENSG00000076554">
    <property type="expression patterns" value="Tissue enhanced (retina)"/>
</dbReference>
<dbReference type="MIM" id="604068">
    <property type="type" value="gene"/>
</dbReference>
<dbReference type="neXtProt" id="NX_P55327"/>
<dbReference type="OpenTargets" id="ENSG00000076554"/>
<dbReference type="PharmGKB" id="PA36686"/>
<dbReference type="VEuPathDB" id="HostDB:ENSG00000076554"/>
<dbReference type="eggNOG" id="KOG4010">
    <property type="taxonomic scope" value="Eukaryota"/>
</dbReference>
<dbReference type="GeneTree" id="ENSGT00940000155294"/>
<dbReference type="HOGENOM" id="CLU_080743_0_1_1"/>
<dbReference type="InParanoid" id="P55327"/>
<dbReference type="OMA" id="MDRREMD"/>
<dbReference type="OrthoDB" id="10000687at2759"/>
<dbReference type="PAN-GO" id="P55327">
    <property type="GO annotations" value="2 GO annotations based on evolutionary models"/>
</dbReference>
<dbReference type="PhylomeDB" id="P55327"/>
<dbReference type="TreeFam" id="TF317562"/>
<dbReference type="PathwayCommons" id="P55327"/>
<dbReference type="Reactome" id="R-HSA-432722">
    <property type="pathway name" value="Golgi Associated Vesicle Biogenesis"/>
</dbReference>
<dbReference type="SignaLink" id="P55327"/>
<dbReference type="SIGNOR" id="P55327"/>
<dbReference type="BioGRID-ORCS" id="7163">
    <property type="hits" value="9 hits in 1144 CRISPR screens"/>
</dbReference>
<dbReference type="ChiTaRS" id="TPD52">
    <property type="organism name" value="human"/>
</dbReference>
<dbReference type="GeneWiki" id="TPD52"/>
<dbReference type="GenomeRNAi" id="7163"/>
<dbReference type="Pharos" id="P55327">
    <property type="development level" value="Tbio"/>
</dbReference>
<dbReference type="PRO" id="PR:P55327"/>
<dbReference type="Proteomes" id="UP000005640">
    <property type="component" value="Chromosome 8"/>
</dbReference>
<dbReference type="RNAct" id="P55327">
    <property type="molecule type" value="protein"/>
</dbReference>
<dbReference type="Bgee" id="ENSG00000076554">
    <property type="expression patterns" value="Expressed in jejunal mucosa and 207 other cell types or tissues"/>
</dbReference>
<dbReference type="ExpressionAtlas" id="P55327">
    <property type="expression patterns" value="baseline and differential"/>
</dbReference>
<dbReference type="GO" id="GO:0005737">
    <property type="term" value="C:cytoplasm"/>
    <property type="evidence" value="ECO:0000314"/>
    <property type="project" value="UniProtKB"/>
</dbReference>
<dbReference type="GO" id="GO:0005783">
    <property type="term" value="C:endoplasmic reticulum"/>
    <property type="evidence" value="ECO:0000314"/>
    <property type="project" value="UniProtKB"/>
</dbReference>
<dbReference type="GO" id="GO:0048471">
    <property type="term" value="C:perinuclear region of cytoplasm"/>
    <property type="evidence" value="ECO:0000314"/>
    <property type="project" value="UniProtKB"/>
</dbReference>
<dbReference type="GO" id="GO:0005509">
    <property type="term" value="F:calcium ion binding"/>
    <property type="evidence" value="ECO:0000314"/>
    <property type="project" value="UniProtKB"/>
</dbReference>
<dbReference type="GO" id="GO:0042803">
    <property type="term" value="F:protein homodimerization activity"/>
    <property type="evidence" value="ECO:0000314"/>
    <property type="project" value="UniProtKB"/>
</dbReference>
<dbReference type="GO" id="GO:0009653">
    <property type="term" value="P:anatomical structure morphogenesis"/>
    <property type="evidence" value="ECO:0000304"/>
    <property type="project" value="ProtInc"/>
</dbReference>
<dbReference type="GO" id="GO:0030183">
    <property type="term" value="P:B cell differentiation"/>
    <property type="evidence" value="ECO:0000270"/>
    <property type="project" value="UniProtKB"/>
</dbReference>
<dbReference type="GO" id="GO:0008284">
    <property type="term" value="P:positive regulation of cell population proliferation"/>
    <property type="evidence" value="ECO:0000318"/>
    <property type="project" value="GO_Central"/>
</dbReference>
<dbReference type="GO" id="GO:0046903">
    <property type="term" value="P:secretion"/>
    <property type="evidence" value="ECO:0000304"/>
    <property type="project" value="UniProtKB"/>
</dbReference>
<dbReference type="InterPro" id="IPR007327">
    <property type="entry name" value="TPD52"/>
</dbReference>
<dbReference type="PANTHER" id="PTHR19307">
    <property type="entry name" value="TUMOR PROTEIN D52"/>
    <property type="match status" value="1"/>
</dbReference>
<dbReference type="PANTHER" id="PTHR19307:SF12">
    <property type="entry name" value="TUMOR PROTEIN D52"/>
    <property type="match status" value="1"/>
</dbReference>
<dbReference type="Pfam" id="PF04201">
    <property type="entry name" value="TPD52"/>
    <property type="match status" value="1"/>
</dbReference>
<keyword id="KW-0025">Alternative splicing</keyword>
<keyword id="KW-0175">Coiled coil</keyword>
<keyword id="KW-0597">Phosphoprotein</keyword>
<keyword id="KW-1267">Proteomics identification</keyword>
<keyword id="KW-1185">Reference proteome</keyword>
<gene>
    <name type="primary">TPD52</name>
</gene>
<accession>P55327</accession>
<accession>B7Z414</accession>
<accession>C9J502</accession>
<accession>D0UFD1</accession>
<accession>D0UFD2</accession>
<accession>D0UFD3</accession>
<accession>D0UFD4</accession>
<accession>D0UFD5</accession>
<accession>E5RKB4</accession>
<accession>Q13056</accession>
<accession>Q53EK8</accession>
<accession>Q6FGP3</accession>
<accession>Q6FGS3</accession>
<accession>Q86YZ2</accession>
<accession>Q9UCX8</accession>
<feature type="chain" id="PRO_0000185738" description="Tumor protein D52">
    <location>
        <begin position="1"/>
        <end position="224"/>
    </location>
</feature>
<feature type="region of interest" description="Disordered" evidence="3">
    <location>
        <begin position="187"/>
        <end position="224"/>
    </location>
</feature>
<feature type="coiled-coil region" evidence="2">
    <location>
        <begin position="62"/>
        <end position="114"/>
    </location>
</feature>
<feature type="compositionally biased region" description="Low complexity" evidence="3">
    <location>
        <begin position="203"/>
        <end position="213"/>
    </location>
</feature>
<feature type="modified residue" description="Phosphoserine" evidence="1">
    <location>
        <position position="36"/>
    </location>
</feature>
<feature type="modified residue" description="Phosphoserine" evidence="1">
    <location>
        <position position="40"/>
    </location>
</feature>
<feature type="modified residue" description="Phosphoserine" evidence="1">
    <location>
        <position position="176"/>
    </location>
</feature>
<feature type="modified residue" description="Phosphoserine" evidence="14">
    <location>
        <position position="223"/>
    </location>
</feature>
<feature type="splice variant" id="VSP_035751" description="In isoform 2 and isoform 4." evidence="5 6 8 9 10 11 12">
    <original>MDCREMDLYEDYQSPFDFDAGVNKSYLYLSPSGNSSPPGSPTLQKF</original>
    <variation>MDRGEQ</variation>
    <location>
        <begin position="1"/>
        <end position="46"/>
    </location>
</feature>
<feature type="splice variant" id="VSP_037378" description="In isoform 3." evidence="9">
    <original>MDCREMDLYEDYQSPFDFDAGVNKSYLYLSPSGNSSPPGSPTLQKF</original>
    <variation>MTPRESAPGRGRAAPPRPTPLGVGTSRESPAEARRSSARRGGRSEPGRAAGGGAAEDTRRRAGDMDRGEQ</variation>
    <location>
        <begin position="1"/>
        <end position="46"/>
    </location>
</feature>
<feature type="splice variant" id="VSP_047718" description="In isoform 8." evidence="7">
    <original>YKKTSETLSQAGQKASAAFSSVGSVITKKLEDVKNSPTFKSFEEKVENLKSKVGGTKPAGGDFGEVLNSAANASATTTEPLPEKTQESL</original>
    <variation>RSKLLAAETELLCLLY</variation>
    <location>
        <begin position="136"/>
        <end position="224"/>
    </location>
</feature>
<feature type="splice variant" id="VSP_047719" description="In isoform 5." evidence="7">
    <original>VK</original>
    <variation>VNIRSIQHSISMPAMR</variation>
    <location>
        <begin position="168"/>
        <end position="169"/>
    </location>
</feature>
<feature type="splice variant" id="VSP_043510" description="In isoform 4 and isoform 6." evidence="5 7">
    <original>K</original>
    <variation>KLQAFSHSFSIRSIQHSISMPAMR</variation>
    <location>
        <position position="169"/>
    </location>
</feature>
<feature type="splice variant" id="VSP_047720" description="In isoform 7." evidence="7">
    <original>K</original>
    <variation>KLQAFSHSFR</variation>
    <location>
        <position position="169"/>
    </location>
</feature>
<feature type="sequence variant" id="VAR_061860" description="In dbSNP:rs35099105.">
    <original>D</original>
    <variation>Y</variation>
    <location>
        <position position="52"/>
    </location>
</feature>
<feature type="sequence conflict" description="In Ref. 9; BAD97351." evidence="13" ref="9">
    <original>E</original>
    <variation>K</variation>
    <location>
        <position position="74"/>
    </location>
</feature>
<feature type="sequence conflict" description="In Ref. 6; CAG46831." evidence="13" ref="6">
    <original>L</original>
    <variation>P</variation>
    <location>
        <position position="165"/>
    </location>
</feature>